<feature type="chain" id="PRO_0000410466" description="Cation-chloride cotransporter 1">
    <location>
        <begin position="1"/>
        <end position="975"/>
    </location>
</feature>
<feature type="topological domain" description="Cytoplasmic" evidence="1">
    <location>
        <begin position="1"/>
        <end position="132"/>
    </location>
</feature>
<feature type="transmembrane region" description="Helical" evidence="1">
    <location>
        <begin position="133"/>
        <end position="153"/>
    </location>
</feature>
<feature type="topological domain" description="Extracellular" evidence="1">
    <location>
        <begin position="154"/>
        <end position="167"/>
    </location>
</feature>
<feature type="transmembrane region" description="Helical" evidence="1">
    <location>
        <begin position="168"/>
        <end position="188"/>
    </location>
</feature>
<feature type="topological domain" description="Cytoplasmic" evidence="1">
    <location>
        <begin position="189"/>
        <end position="214"/>
    </location>
</feature>
<feature type="transmembrane region" description="Helical" evidence="1">
    <location>
        <begin position="215"/>
        <end position="235"/>
    </location>
</feature>
<feature type="topological domain" description="Extracellular" evidence="1">
    <location>
        <begin position="236"/>
        <end position="273"/>
    </location>
</feature>
<feature type="transmembrane region" description="Helical" evidence="1">
    <location>
        <begin position="274"/>
        <end position="294"/>
    </location>
</feature>
<feature type="topological domain" description="Cytoplasmic" evidence="1">
    <location>
        <begin position="295"/>
        <end position="296"/>
    </location>
</feature>
<feature type="transmembrane region" description="Helical" evidence="1">
    <location>
        <begin position="297"/>
        <end position="317"/>
    </location>
</feature>
<feature type="topological domain" description="Extracellular" evidence="1">
    <location>
        <begin position="318"/>
        <end position="359"/>
    </location>
</feature>
<feature type="transmembrane region" description="Helical" evidence="1">
    <location>
        <begin position="360"/>
        <end position="380"/>
    </location>
</feature>
<feature type="topological domain" description="Cytoplasmic" evidence="1">
    <location>
        <begin position="381"/>
        <end position="398"/>
    </location>
</feature>
<feature type="transmembrane region" description="Helical" evidence="1">
    <location>
        <begin position="399"/>
        <end position="419"/>
    </location>
</feature>
<feature type="topological domain" description="Extracellular" evidence="1">
    <location>
        <begin position="420"/>
        <end position="434"/>
    </location>
</feature>
<feature type="transmembrane region" description="Helical" evidence="1">
    <location>
        <begin position="435"/>
        <end position="455"/>
    </location>
</feature>
<feature type="topological domain" description="Cytoplasmic" evidence="1">
    <location>
        <begin position="456"/>
        <end position="490"/>
    </location>
</feature>
<feature type="transmembrane region" description="Helical" evidence="1">
    <location>
        <begin position="491"/>
        <end position="511"/>
    </location>
</feature>
<feature type="topological domain" description="Extracellular" evidence="1">
    <location>
        <begin position="512"/>
        <end position="515"/>
    </location>
</feature>
<feature type="transmembrane region" description="Helical" evidence="1">
    <location>
        <begin position="516"/>
        <end position="536"/>
    </location>
</feature>
<feature type="topological domain" description="Cytoplasmic" evidence="1">
    <location>
        <begin position="537"/>
        <end position="544"/>
    </location>
</feature>
<feature type="transmembrane region" description="Helical" evidence="1">
    <location>
        <begin position="545"/>
        <end position="565"/>
    </location>
</feature>
<feature type="topological domain" description="Extracellular" evidence="1">
    <location>
        <begin position="566"/>
        <end position="571"/>
    </location>
</feature>
<feature type="transmembrane region" description="Helical" evidence="1">
    <location>
        <begin position="572"/>
        <end position="592"/>
    </location>
</feature>
<feature type="topological domain" description="Cytoplasmic" evidence="1">
    <location>
        <begin position="593"/>
        <end position="975"/>
    </location>
</feature>
<feature type="region of interest" description="Disordered" evidence="2">
    <location>
        <begin position="1"/>
        <end position="29"/>
    </location>
</feature>
<feature type="region of interest" description="Disordered" evidence="2">
    <location>
        <begin position="104"/>
        <end position="124"/>
    </location>
</feature>
<feature type="glycosylation site" description="N-linked (GlcNAc...) asparagine" evidence="1">
    <location>
        <position position="256"/>
    </location>
</feature>
<dbReference type="EMBL" id="AM113986">
    <property type="protein sequence ID" value="CAJ34849.1"/>
    <property type="molecule type" value="mRNA"/>
</dbReference>
<dbReference type="EMBL" id="AC009917">
    <property type="protein sequence ID" value="AAF19744.1"/>
    <property type="status" value="ALT_SEQ"/>
    <property type="molecule type" value="Genomic_DNA"/>
</dbReference>
<dbReference type="EMBL" id="CP002684">
    <property type="protein sequence ID" value="AEE31217.1"/>
    <property type="molecule type" value="Genomic_DNA"/>
</dbReference>
<dbReference type="EMBL" id="CP002684">
    <property type="protein sequence ID" value="AEE31218.1"/>
    <property type="molecule type" value="Genomic_DNA"/>
</dbReference>
<dbReference type="EMBL" id="CP002684">
    <property type="protein sequence ID" value="AEE31219.1"/>
    <property type="molecule type" value="Genomic_DNA"/>
</dbReference>
<dbReference type="EMBL" id="AK226602">
    <property type="protein sequence ID" value="BAE98715.1"/>
    <property type="molecule type" value="mRNA"/>
</dbReference>
<dbReference type="PIR" id="H86428">
    <property type="entry name" value="H86428"/>
</dbReference>
<dbReference type="RefSeq" id="NP_174333.2">
    <property type="nucleotide sequence ID" value="NM_102781.3"/>
</dbReference>
<dbReference type="RefSeq" id="NP_849731.1">
    <property type="nucleotide sequence ID" value="NM_179400.1"/>
</dbReference>
<dbReference type="RefSeq" id="NP_849732.1">
    <property type="nucleotide sequence ID" value="NM_179401.2"/>
</dbReference>
<dbReference type="SMR" id="Q2UVJ5"/>
<dbReference type="FunCoup" id="Q2UVJ5">
    <property type="interactions" value="2679"/>
</dbReference>
<dbReference type="STRING" id="3702.Q2UVJ5"/>
<dbReference type="GlyCosmos" id="Q2UVJ5">
    <property type="glycosylation" value="1 site, No reported glycans"/>
</dbReference>
<dbReference type="GlyGen" id="Q2UVJ5">
    <property type="glycosylation" value="1 site"/>
</dbReference>
<dbReference type="iPTMnet" id="Q2UVJ5"/>
<dbReference type="PaxDb" id="3702-AT1G30450.2"/>
<dbReference type="ProteomicsDB" id="223959"/>
<dbReference type="EnsemblPlants" id="AT1G30450.1">
    <property type="protein sequence ID" value="AT1G30450.1"/>
    <property type="gene ID" value="AT1G30450"/>
</dbReference>
<dbReference type="EnsemblPlants" id="AT1G30450.2">
    <property type="protein sequence ID" value="AT1G30450.2"/>
    <property type="gene ID" value="AT1G30450"/>
</dbReference>
<dbReference type="EnsemblPlants" id="AT1G30450.3">
    <property type="protein sequence ID" value="AT1G30450.3"/>
    <property type="gene ID" value="AT1G30450"/>
</dbReference>
<dbReference type="GeneID" id="839924"/>
<dbReference type="Gramene" id="AT1G30450.1">
    <property type="protein sequence ID" value="AT1G30450.1"/>
    <property type="gene ID" value="AT1G30450"/>
</dbReference>
<dbReference type="Gramene" id="AT1G30450.2">
    <property type="protein sequence ID" value="AT1G30450.2"/>
    <property type="gene ID" value="AT1G30450"/>
</dbReference>
<dbReference type="Gramene" id="AT1G30450.3">
    <property type="protein sequence ID" value="AT1G30450.3"/>
    <property type="gene ID" value="AT1G30450"/>
</dbReference>
<dbReference type="KEGG" id="ath:AT1G30450"/>
<dbReference type="Araport" id="AT1G30450"/>
<dbReference type="TAIR" id="AT1G30450">
    <property type="gene designation" value="CCC1"/>
</dbReference>
<dbReference type="eggNOG" id="KOG2082">
    <property type="taxonomic scope" value="Eukaryota"/>
</dbReference>
<dbReference type="HOGENOM" id="CLU_001883_1_2_1"/>
<dbReference type="InParanoid" id="Q2UVJ5"/>
<dbReference type="OrthoDB" id="2020542at2759"/>
<dbReference type="PhylomeDB" id="Q2UVJ5"/>
<dbReference type="PRO" id="PR:Q2UVJ5"/>
<dbReference type="Proteomes" id="UP000006548">
    <property type="component" value="Chromosome 1"/>
</dbReference>
<dbReference type="ExpressionAtlas" id="Q2UVJ5">
    <property type="expression patterns" value="baseline and differential"/>
</dbReference>
<dbReference type="GO" id="GO:0005768">
    <property type="term" value="C:endosome"/>
    <property type="evidence" value="ECO:0007005"/>
    <property type="project" value="TAIR"/>
</dbReference>
<dbReference type="GO" id="GO:0005794">
    <property type="term" value="C:Golgi apparatus"/>
    <property type="evidence" value="ECO:0007005"/>
    <property type="project" value="TAIR"/>
</dbReference>
<dbReference type="GO" id="GO:0016020">
    <property type="term" value="C:membrane"/>
    <property type="evidence" value="ECO:0007669"/>
    <property type="project" value="UniProtKB-SubCell"/>
</dbReference>
<dbReference type="GO" id="GO:0005802">
    <property type="term" value="C:trans-Golgi network"/>
    <property type="evidence" value="ECO:0007005"/>
    <property type="project" value="TAIR"/>
</dbReference>
<dbReference type="GO" id="GO:0008511">
    <property type="term" value="F:sodium:potassium:chloride symporter activity"/>
    <property type="evidence" value="ECO:0000314"/>
    <property type="project" value="TAIR"/>
</dbReference>
<dbReference type="FunFam" id="1.20.1740.10:FF:000021">
    <property type="entry name" value="Cation-chloride cotransporter 1"/>
    <property type="match status" value="1"/>
</dbReference>
<dbReference type="Gene3D" id="1.20.1740.10">
    <property type="entry name" value="Amino acid/polyamine transporter I"/>
    <property type="match status" value="1"/>
</dbReference>
<dbReference type="InterPro" id="IPR004841">
    <property type="entry name" value="AA-permease/SLC12A_dom"/>
</dbReference>
<dbReference type="InterPro" id="IPR018491">
    <property type="entry name" value="SLC12_C"/>
</dbReference>
<dbReference type="InterPro" id="IPR004842">
    <property type="entry name" value="SLC12A_fam"/>
</dbReference>
<dbReference type="NCBIfam" id="TIGR00930">
    <property type="entry name" value="2a30"/>
    <property type="match status" value="1"/>
</dbReference>
<dbReference type="PANTHER" id="PTHR11827:SF100">
    <property type="entry name" value="CATION-CHLORIDE COTRANSPORTER 1"/>
    <property type="match status" value="1"/>
</dbReference>
<dbReference type="PANTHER" id="PTHR11827">
    <property type="entry name" value="SOLUTE CARRIER FAMILY 12, CATION COTRANSPORTERS"/>
    <property type="match status" value="1"/>
</dbReference>
<dbReference type="Pfam" id="PF00324">
    <property type="entry name" value="AA_permease"/>
    <property type="match status" value="1"/>
</dbReference>
<dbReference type="Pfam" id="PF03522">
    <property type="entry name" value="SLC12"/>
    <property type="match status" value="2"/>
</dbReference>
<sequence>MDSGDIEEAGGNGEEEFRSGPRLGGSKYRPVVAHDRAVVEMSSIDPGSSSSTLKNIKVVAPGDVGAGVRGPEDGVNGHQKESKLELFGFDSLVNILGLKSMTGEQIQAPSSPRDGEDISITQGHPKPPALKMGTMMGVFVPCLQNILGIIYYIRFTWIVGMAGIGQGLVLVFLCGLCTFLTTISLSAIATNGAMKGGGPYYLIGRALGPEVGISIGLCFFLGNAVAGALYVLGAVETFLKAFPAAGIFRETITKVNGTAVSESIQSPNSHDLQVYGIVVTILLCFIVFGGVKMINRVAPAFLVPVLLSIFCIFIGIFLAKTDDPDNGITGLRLKSFKDNWGSAYQMTNDAGIPDPTGGTYWSFNELVGLFFPAVTGIMAGSNRSASLKDTQKSIPVGTLAATLTTTSLYLISVLFFGAVATRDKLLTDRLLTATIAWPFPAIVHVGIILSTLGAALQSLTGAPRLLAAIANDDILPILNYFKVADTSEPHIATLFTAFICIGCVVIGNLDLITPTVTMFYLLCYSGVNLSCFLLDLLDAPSWRPRWKYHHWSLSFVGASLCIVIMFLISWSFTVVAIALASLIYKYVGLKGKAGDWGDGFKSAYFQLALRSLRSLGANQVHPKNWYPIPLVFCRPWGQLPENVPCHPKLADFANCMKKKGRGMSIFVSILDGDYYECAEEAKEACKQLATYIEYKRCEGVAEIVVAPNMTEGFRGIIQTMGLGNLKPNIVVMRYPEIWRRENLTEIPSTFVGIINDCITANKAVVIIKGLDEWPNEYQRQYGTIDLYWIVRDGGLMLLLSQLLLTKESFESCKIQLFCIAEEDSDAEALKADVKKFLYDLRMHAEVIVVTMKSWDIRSEGNSQEDSLEAFDAAQRRISDYLGEIKRQGSNPLLANGKPMVVNEQQVEKFLYTMLKLNSTILSYSRMAAVVLVSLPPPPLNHPAYFYMEYMDLLVENVPRMLIVRGYHRDVVTLFT</sequence>
<reference key="1">
    <citation type="journal article" date="2007" name="Plant J.">
        <title>Identification and functional characterization of cation-chloride cotransporters in plants.</title>
        <authorList>
            <person name="Colmenero-Flores J.M."/>
            <person name="Martinez G."/>
            <person name="Gamba G."/>
            <person name="Vazquez N."/>
            <person name="Iglesias D.J."/>
            <person name="Brumos J."/>
            <person name="Talon M."/>
        </authorList>
    </citation>
    <scope>NUCLEOTIDE SEQUENCE [MRNA]</scope>
    <scope>FUNCTION</scope>
    <scope>TISSUE SPECIFICITY</scope>
    <scope>DISRUPTION PHENOTYPE</scope>
    <source>
        <strain>cv. Columbia</strain>
        <tissue>Leaf</tissue>
    </source>
</reference>
<reference key="2">
    <citation type="journal article" date="2000" name="Nature">
        <title>Sequence and analysis of chromosome 1 of the plant Arabidopsis thaliana.</title>
        <authorList>
            <person name="Theologis A."/>
            <person name="Ecker J.R."/>
            <person name="Palm C.J."/>
            <person name="Federspiel N.A."/>
            <person name="Kaul S."/>
            <person name="White O."/>
            <person name="Alonso J."/>
            <person name="Altafi H."/>
            <person name="Araujo R."/>
            <person name="Bowman C.L."/>
            <person name="Brooks S.Y."/>
            <person name="Buehler E."/>
            <person name="Chan A."/>
            <person name="Chao Q."/>
            <person name="Chen H."/>
            <person name="Cheuk R.F."/>
            <person name="Chin C.W."/>
            <person name="Chung M.K."/>
            <person name="Conn L."/>
            <person name="Conway A.B."/>
            <person name="Conway A.R."/>
            <person name="Creasy T.H."/>
            <person name="Dewar K."/>
            <person name="Dunn P."/>
            <person name="Etgu P."/>
            <person name="Feldblyum T.V."/>
            <person name="Feng J.-D."/>
            <person name="Fong B."/>
            <person name="Fujii C.Y."/>
            <person name="Gill J.E."/>
            <person name="Goldsmith A.D."/>
            <person name="Haas B."/>
            <person name="Hansen N.F."/>
            <person name="Hughes B."/>
            <person name="Huizar L."/>
            <person name="Hunter J.L."/>
            <person name="Jenkins J."/>
            <person name="Johnson-Hopson C."/>
            <person name="Khan S."/>
            <person name="Khaykin E."/>
            <person name="Kim C.J."/>
            <person name="Koo H.L."/>
            <person name="Kremenetskaia I."/>
            <person name="Kurtz D.B."/>
            <person name="Kwan A."/>
            <person name="Lam B."/>
            <person name="Langin-Hooper S."/>
            <person name="Lee A."/>
            <person name="Lee J.M."/>
            <person name="Lenz C.A."/>
            <person name="Li J.H."/>
            <person name="Li Y.-P."/>
            <person name="Lin X."/>
            <person name="Liu S.X."/>
            <person name="Liu Z.A."/>
            <person name="Luros J.S."/>
            <person name="Maiti R."/>
            <person name="Marziali A."/>
            <person name="Militscher J."/>
            <person name="Miranda M."/>
            <person name="Nguyen M."/>
            <person name="Nierman W.C."/>
            <person name="Osborne B.I."/>
            <person name="Pai G."/>
            <person name="Peterson J."/>
            <person name="Pham P.K."/>
            <person name="Rizzo M."/>
            <person name="Rooney T."/>
            <person name="Rowley D."/>
            <person name="Sakano H."/>
            <person name="Salzberg S.L."/>
            <person name="Schwartz J.R."/>
            <person name="Shinn P."/>
            <person name="Southwick A.M."/>
            <person name="Sun H."/>
            <person name="Tallon L.J."/>
            <person name="Tambunga G."/>
            <person name="Toriumi M.J."/>
            <person name="Town C.D."/>
            <person name="Utterback T."/>
            <person name="Van Aken S."/>
            <person name="Vaysberg M."/>
            <person name="Vysotskaia V.S."/>
            <person name="Walker M."/>
            <person name="Wu D."/>
            <person name="Yu G."/>
            <person name="Fraser C.M."/>
            <person name="Venter J.C."/>
            <person name="Davis R.W."/>
        </authorList>
    </citation>
    <scope>NUCLEOTIDE SEQUENCE [LARGE SCALE GENOMIC DNA]</scope>
    <source>
        <strain>cv. Columbia</strain>
    </source>
</reference>
<reference key="3">
    <citation type="journal article" date="2017" name="Plant J.">
        <title>Araport11: a complete reannotation of the Arabidopsis thaliana reference genome.</title>
        <authorList>
            <person name="Cheng C.Y."/>
            <person name="Krishnakumar V."/>
            <person name="Chan A.P."/>
            <person name="Thibaud-Nissen F."/>
            <person name="Schobel S."/>
            <person name="Town C.D."/>
        </authorList>
    </citation>
    <scope>GENOME REANNOTATION</scope>
    <source>
        <strain>cv. Columbia</strain>
    </source>
</reference>
<reference key="4">
    <citation type="submission" date="2006-07" db="EMBL/GenBank/DDBJ databases">
        <title>Large-scale analysis of RIKEN Arabidopsis full-length (RAFL) cDNAs.</title>
        <authorList>
            <person name="Totoki Y."/>
            <person name="Seki M."/>
            <person name="Ishida J."/>
            <person name="Nakajima M."/>
            <person name="Enju A."/>
            <person name="Kamiya A."/>
            <person name="Narusaka M."/>
            <person name="Shin-i T."/>
            <person name="Nakagawa M."/>
            <person name="Sakamoto N."/>
            <person name="Oishi K."/>
            <person name="Kohara Y."/>
            <person name="Kobayashi M."/>
            <person name="Toyoda A."/>
            <person name="Sakaki Y."/>
            <person name="Sakurai T."/>
            <person name="Iida K."/>
            <person name="Akiyama K."/>
            <person name="Satou M."/>
            <person name="Toyoda T."/>
            <person name="Konagaya A."/>
            <person name="Carninci P."/>
            <person name="Kawai J."/>
            <person name="Hayashizaki Y."/>
            <person name="Shinozaki K."/>
        </authorList>
    </citation>
    <scope>NUCLEOTIDE SEQUENCE [LARGE SCALE MRNA]</scope>
    <source>
        <strain>cv. Columbia</strain>
    </source>
</reference>
<reference key="5">
    <citation type="journal article" date="2004" name="Genetics">
        <title>Arabidopsis hapless mutations define essential gametophytic functions.</title>
        <authorList>
            <person name="Johnson M.A."/>
            <person name="von Besser K."/>
            <person name="Zhou Q."/>
            <person name="Smith E."/>
            <person name="Aux G."/>
            <person name="Patton D."/>
            <person name="Levin J.Z."/>
            <person name="Preuss D."/>
        </authorList>
    </citation>
    <scope>DISRUPTION PHENOTYPE</scope>
</reference>
<reference key="6">
    <citation type="journal article" date="2009" name="J. Proteomics">
        <title>Phosphoproteomic analysis of nuclei-enriched fractions from Arabidopsis thaliana.</title>
        <authorList>
            <person name="Jones A.M.E."/>
            <person name="MacLean D."/>
            <person name="Studholme D.J."/>
            <person name="Serna-Sanz A."/>
            <person name="Andreasson E."/>
            <person name="Rathjen J.P."/>
            <person name="Peck S.C."/>
        </authorList>
    </citation>
    <scope>IDENTIFICATION BY MASS SPECTROMETRY [LARGE SCALE ANALYSIS]</scope>
    <source>
        <strain>cv. Columbia</strain>
    </source>
</reference>
<reference key="7">
    <citation type="journal article" date="2009" name="Plant Physiol.">
        <title>Large-scale Arabidopsis phosphoproteome profiling reveals novel chloroplast kinase substrates and phosphorylation networks.</title>
        <authorList>
            <person name="Reiland S."/>
            <person name="Messerli G."/>
            <person name="Baerenfaller K."/>
            <person name="Gerrits B."/>
            <person name="Endler A."/>
            <person name="Grossmann J."/>
            <person name="Gruissem W."/>
            <person name="Baginsky S."/>
        </authorList>
    </citation>
    <scope>IDENTIFICATION BY MASS SPECTROMETRY [LARGE SCALE ANALYSIS]</scope>
</reference>
<keyword id="KW-0325">Glycoprotein</keyword>
<keyword id="KW-0406">Ion transport</keyword>
<keyword id="KW-0472">Membrane</keyword>
<keyword id="KW-0630">Potassium</keyword>
<keyword id="KW-0633">Potassium transport</keyword>
<keyword id="KW-1185">Reference proteome</keyword>
<keyword id="KW-0915">Sodium</keyword>
<keyword id="KW-0739">Sodium transport</keyword>
<keyword id="KW-0769">Symport</keyword>
<keyword id="KW-0812">Transmembrane</keyword>
<keyword id="KW-1133">Transmembrane helix</keyword>
<keyword id="KW-0813">Transport</keyword>
<gene>
    <name type="primary">CCC1</name>
    <name type="synonym">HAP5</name>
    <name type="ordered locus">At1g30450</name>
    <name type="ORF">F26G16.4</name>
</gene>
<name>CCC1_ARATH</name>
<protein>
    <recommendedName>
        <fullName>Cation-chloride cotransporter 1</fullName>
        <shortName>AtCCC1</shortName>
    </recommendedName>
    <alternativeName>
        <fullName>Protein HAPLESS 5</fullName>
    </alternativeName>
</protein>
<comment type="function">
    <text evidence="4">Cation/chloride cotransporter that mediates potassium-chloride and sodium-chloride cotransports. Involved in plant development and Cl(-) homeostasis. May be involved in long distance Cl(-) transport. Does not function as an H(+)-dependent cotransporter.</text>
</comment>
<comment type="subcellular location">
    <subcellularLocation>
        <location evidence="5">Membrane</location>
        <topology evidence="5">Multi-pass membrane protein</topology>
    </subcellularLocation>
</comment>
<comment type="tissue specificity">
    <text evidence="4">Expressed in young seedlings cotyledon tips, plant vasculature, root tips and axillary buds. Expressed in root vascular strand in the pericycle and other parenchyma cells bordering xylem vessels. Expressed in the xylem/symplast boundaries of rosette stems, rosette leaves and cauline leaves. Expressed in stipules, trichomes and hydathodes. Expressed in pollen grains.</text>
</comment>
<comment type="disruption phenotype">
    <text evidence="3 4">Bushy plants with small leaves, short roots and short inflorescences containing a higher number of stems. Alteration in pollen grain development, high number of aborted siliques and few siliques with low number of seeds.</text>
</comment>
<comment type="miscellaneous">
    <text>Cotransport is inhibited by the loop diuretic bumetanide.</text>
</comment>
<comment type="similarity">
    <text evidence="5">Belongs to the SLC12A transporter family.</text>
</comment>
<comment type="sequence caution" evidence="5">
    <conflict type="erroneous gene model prediction">
        <sequence resource="EMBL-CDS" id="AAF19744"/>
    </conflict>
</comment>
<accession>Q2UVJ5</accession>
<accession>Q9S9Q8</accession>
<proteinExistence type="evidence at protein level"/>
<organism>
    <name type="scientific">Arabidopsis thaliana</name>
    <name type="common">Mouse-ear cress</name>
    <dbReference type="NCBI Taxonomy" id="3702"/>
    <lineage>
        <taxon>Eukaryota</taxon>
        <taxon>Viridiplantae</taxon>
        <taxon>Streptophyta</taxon>
        <taxon>Embryophyta</taxon>
        <taxon>Tracheophyta</taxon>
        <taxon>Spermatophyta</taxon>
        <taxon>Magnoliopsida</taxon>
        <taxon>eudicotyledons</taxon>
        <taxon>Gunneridae</taxon>
        <taxon>Pentapetalae</taxon>
        <taxon>rosids</taxon>
        <taxon>malvids</taxon>
        <taxon>Brassicales</taxon>
        <taxon>Brassicaceae</taxon>
        <taxon>Camelineae</taxon>
        <taxon>Arabidopsis</taxon>
    </lineage>
</organism>
<evidence type="ECO:0000255" key="1"/>
<evidence type="ECO:0000256" key="2">
    <source>
        <dbReference type="SAM" id="MobiDB-lite"/>
    </source>
</evidence>
<evidence type="ECO:0000269" key="3">
    <source>
    </source>
</evidence>
<evidence type="ECO:0000269" key="4">
    <source>
    </source>
</evidence>
<evidence type="ECO:0000305" key="5"/>